<proteinExistence type="inferred from homology"/>
<evidence type="ECO:0000255" key="1">
    <source>
        <dbReference type="HAMAP-Rule" id="MF_00274"/>
    </source>
</evidence>
<reference key="1">
    <citation type="journal article" date="2011" name="MBio">
        <title>Novel metabolic attributes of the genus Cyanothece, comprising a group of unicellular nitrogen-fixing Cyanobacteria.</title>
        <authorList>
            <person name="Bandyopadhyay A."/>
            <person name="Elvitigala T."/>
            <person name="Welsh E."/>
            <person name="Stockel J."/>
            <person name="Liberton M."/>
            <person name="Min H."/>
            <person name="Sherman L.A."/>
            <person name="Pakrasi H.B."/>
        </authorList>
    </citation>
    <scope>NUCLEOTIDE SEQUENCE [LARGE SCALE GENOMIC DNA]</scope>
    <source>
        <strain>PCC 7425 / ATCC 29141</strain>
    </source>
</reference>
<name>Y899_CYAP4</name>
<protein>
    <recommendedName>
        <fullName evidence="1">Nucleoid-associated protein Cyan7425_0899</fullName>
    </recommendedName>
</protein>
<sequence>MTQGQGFGFGLGKMKELAAAIQKAQQVQEGAKKLQEDLEKMEIEGVAAGGLVKVIMSGNQEPRRVEISPDLMSEGAEVVADLVTAAMKDAYLKSTTTMRERMEELTGGLSLPGM</sequence>
<gene>
    <name type="ordered locus">Cyan7425_0899</name>
</gene>
<comment type="function">
    <text evidence="1">Binds to DNA and alters its conformation. May be involved in regulation of gene expression, nucleoid organization and DNA protection.</text>
</comment>
<comment type="subunit">
    <text evidence="1">Homodimer.</text>
</comment>
<comment type="subcellular location">
    <subcellularLocation>
        <location evidence="1">Cytoplasm</location>
        <location evidence="1">Nucleoid</location>
    </subcellularLocation>
</comment>
<comment type="similarity">
    <text evidence="1">Belongs to the YbaB/EbfC family.</text>
</comment>
<accession>B8HWY2</accession>
<organism>
    <name type="scientific">Cyanothece sp. (strain PCC 7425 / ATCC 29141)</name>
    <dbReference type="NCBI Taxonomy" id="395961"/>
    <lineage>
        <taxon>Bacteria</taxon>
        <taxon>Bacillati</taxon>
        <taxon>Cyanobacteriota</taxon>
        <taxon>Cyanophyceae</taxon>
        <taxon>Gomontiellales</taxon>
        <taxon>Cyanothecaceae</taxon>
        <taxon>Cyanothece</taxon>
    </lineage>
</organism>
<dbReference type="EMBL" id="CP001344">
    <property type="protein sequence ID" value="ACL43285.1"/>
    <property type="molecule type" value="Genomic_DNA"/>
</dbReference>
<dbReference type="SMR" id="B8HWY2"/>
<dbReference type="STRING" id="395961.Cyan7425_0899"/>
<dbReference type="KEGG" id="cyn:Cyan7425_0899"/>
<dbReference type="eggNOG" id="COG0718">
    <property type="taxonomic scope" value="Bacteria"/>
</dbReference>
<dbReference type="HOGENOM" id="CLU_140930_0_1_3"/>
<dbReference type="OrthoDB" id="487780at2"/>
<dbReference type="GO" id="GO:0043590">
    <property type="term" value="C:bacterial nucleoid"/>
    <property type="evidence" value="ECO:0007669"/>
    <property type="project" value="UniProtKB-UniRule"/>
</dbReference>
<dbReference type="GO" id="GO:0005829">
    <property type="term" value="C:cytosol"/>
    <property type="evidence" value="ECO:0007669"/>
    <property type="project" value="TreeGrafter"/>
</dbReference>
<dbReference type="GO" id="GO:0003677">
    <property type="term" value="F:DNA binding"/>
    <property type="evidence" value="ECO:0007669"/>
    <property type="project" value="UniProtKB-UniRule"/>
</dbReference>
<dbReference type="Gene3D" id="3.30.1310.10">
    <property type="entry name" value="Nucleoid-associated protein YbaB-like domain"/>
    <property type="match status" value="1"/>
</dbReference>
<dbReference type="HAMAP" id="MF_00274">
    <property type="entry name" value="DNA_YbaB_EbfC"/>
    <property type="match status" value="1"/>
</dbReference>
<dbReference type="InterPro" id="IPR036894">
    <property type="entry name" value="YbaB-like_sf"/>
</dbReference>
<dbReference type="InterPro" id="IPR004401">
    <property type="entry name" value="YbaB/EbfC"/>
</dbReference>
<dbReference type="NCBIfam" id="TIGR00103">
    <property type="entry name" value="DNA_YbaB_EbfC"/>
    <property type="match status" value="1"/>
</dbReference>
<dbReference type="PANTHER" id="PTHR33449">
    <property type="entry name" value="NUCLEOID-ASSOCIATED PROTEIN YBAB"/>
    <property type="match status" value="1"/>
</dbReference>
<dbReference type="PANTHER" id="PTHR33449:SF1">
    <property type="entry name" value="NUCLEOID-ASSOCIATED PROTEIN YBAB"/>
    <property type="match status" value="1"/>
</dbReference>
<dbReference type="Pfam" id="PF02575">
    <property type="entry name" value="YbaB_DNA_bd"/>
    <property type="match status" value="1"/>
</dbReference>
<dbReference type="PIRSF" id="PIRSF004555">
    <property type="entry name" value="UCP004555"/>
    <property type="match status" value="1"/>
</dbReference>
<dbReference type="SUPFAM" id="SSF82607">
    <property type="entry name" value="YbaB-like"/>
    <property type="match status" value="1"/>
</dbReference>
<keyword id="KW-0963">Cytoplasm</keyword>
<keyword id="KW-0238">DNA-binding</keyword>
<feature type="chain" id="PRO_1000197653" description="Nucleoid-associated protein Cyan7425_0899">
    <location>
        <begin position="1"/>
        <end position="114"/>
    </location>
</feature>